<accession>P0DB85</accession>
<accession>Q879I7</accession>
<accession>Q8K644</accession>
<keyword id="KW-0963">Cytoplasm</keyword>
<keyword id="KW-0342">GTP-binding</keyword>
<keyword id="KW-0396">Initiation factor</keyword>
<keyword id="KW-0547">Nucleotide-binding</keyword>
<keyword id="KW-0648">Protein biosynthesis</keyword>
<sequence length="953" mass="105508">MSKKRLHEIAKEIGKSSKEVVEHAKYLGLDVKSHASSVEEADAKKIISSFSKASKPDVTASQTVKPKEVAQPSVTVVKETGSEHVEKTQVSKPKSRNFKAEREARAKEQAARKQANGSSHRSQERRGGYRQPNNHQTNEQGDKRITHRSQGDTNDKRIERKASNVSPRHDNHQLVGDRNRSFAKENHKNGRFTNQKKQGRQEPQSKSPKIDFKARAAALKAEQNAEYSRQSETRFRAQQEAKRLAELARQEAKEAALKAQAEEMSHREAALKSIEEAETKLKSSNISAKSTADNRRKKQARPEKNRELTHHSQEGQKKNKKSWNSQNQVRNQKNSNWNKNKKTKKGKNAKNTNTAPKPVTERKFHELPKEFEYTEGMTVAEIAKRIKREPAEIVKKLFMMGVMATQNQSLDGDTIELLMVDYGIEAKAKVEVDDADIERFFEDENYLNPENIVERAPVVTIMGHVDHGKTTLLDTLRNSRVATGEAGGITQHIGAYQIEEAGKKITFLDTPGHAAFTSMRARGASVTDITILIVAADDGVMPQTIEAINHSKAAGVPIIVAINKIDKPGANPERVIAELAEYGIISTAWGGECEFVEISAKFNKNIDELLETVLLVAEVEELKADPTVRAIGTVIEARLDKGKGAIATLLVQQGTLHVQDPIVVGNTFGRVRAMVNDLGRRVKSAEPSTPVSITGLNETPMAGDHFAVYADEKAARAAGEERSKRALLKQRQNTQRVSLDNLFDTLKAGEIKTVNVIIKADVQGSVEALAASLVKIEVEGVRVNVVHSAVGAINESDVTLAEASNAVIIGFNVRPTPQARQQADTDDVEIRLHSIIYKVIEEVEEAMKGKLDPVYQEKILGEAIIRETFKVSKVGTIGGFMVINGKVTRDSSVRVIRDSVVIFDGKLASLKHYKDDVKEVGNAQEGGLMIENFNDLKVDDTIEAYIMEEIVRK</sequence>
<protein>
    <recommendedName>
        <fullName evidence="2">Translation initiation factor IF-2</fullName>
    </recommendedName>
</protein>
<comment type="function">
    <text evidence="2">One of the essential components for the initiation of protein synthesis. Protects formylmethionyl-tRNA from spontaneous hydrolysis and promotes its binding to the 30S ribosomal subunits. Also involved in the hydrolysis of GTP during the formation of the 70S ribosomal complex.</text>
</comment>
<comment type="subcellular location">
    <subcellularLocation>
        <location evidence="2">Cytoplasm</location>
    </subcellularLocation>
</comment>
<comment type="similarity">
    <text evidence="2">Belongs to the TRAFAC class translation factor GTPase superfamily. Classic translation factor GTPase family. IF-2 subfamily.</text>
</comment>
<feature type="chain" id="PRO_0000411380" description="Translation initiation factor IF-2">
    <location>
        <begin position="1"/>
        <end position="953"/>
    </location>
</feature>
<feature type="domain" description="tr-type G">
    <location>
        <begin position="454"/>
        <end position="623"/>
    </location>
</feature>
<feature type="region of interest" description="Disordered" evidence="3">
    <location>
        <begin position="48"/>
        <end position="212"/>
    </location>
</feature>
<feature type="region of interest" description="Disordered" evidence="3">
    <location>
        <begin position="279"/>
        <end position="367"/>
    </location>
</feature>
<feature type="region of interest" description="G1" evidence="1">
    <location>
        <begin position="463"/>
        <end position="470"/>
    </location>
</feature>
<feature type="region of interest" description="G2" evidence="1">
    <location>
        <begin position="488"/>
        <end position="492"/>
    </location>
</feature>
<feature type="region of interest" description="G3" evidence="1">
    <location>
        <begin position="509"/>
        <end position="512"/>
    </location>
</feature>
<feature type="region of interest" description="G4" evidence="1">
    <location>
        <begin position="563"/>
        <end position="566"/>
    </location>
</feature>
<feature type="region of interest" description="G5" evidence="1">
    <location>
        <begin position="599"/>
        <end position="601"/>
    </location>
</feature>
<feature type="compositionally biased region" description="Basic and acidic residues" evidence="3">
    <location>
        <begin position="80"/>
        <end position="89"/>
    </location>
</feature>
<feature type="compositionally biased region" description="Basic and acidic residues" evidence="3">
    <location>
        <begin position="98"/>
        <end position="111"/>
    </location>
</feature>
<feature type="compositionally biased region" description="Basic and acidic residues" evidence="3">
    <location>
        <begin position="140"/>
        <end position="188"/>
    </location>
</feature>
<feature type="compositionally biased region" description="Polar residues" evidence="3">
    <location>
        <begin position="191"/>
        <end position="207"/>
    </location>
</feature>
<feature type="compositionally biased region" description="Polar residues" evidence="3">
    <location>
        <begin position="282"/>
        <end position="291"/>
    </location>
</feature>
<feature type="compositionally biased region" description="Basic and acidic residues" evidence="3">
    <location>
        <begin position="300"/>
        <end position="317"/>
    </location>
</feature>
<feature type="compositionally biased region" description="Low complexity" evidence="3">
    <location>
        <begin position="322"/>
        <end position="338"/>
    </location>
</feature>
<feature type="compositionally biased region" description="Basic residues" evidence="3">
    <location>
        <begin position="339"/>
        <end position="348"/>
    </location>
</feature>
<feature type="binding site" evidence="2">
    <location>
        <begin position="463"/>
        <end position="470"/>
    </location>
    <ligand>
        <name>GTP</name>
        <dbReference type="ChEBI" id="CHEBI:37565"/>
    </ligand>
</feature>
<feature type="binding site" evidence="2">
    <location>
        <begin position="509"/>
        <end position="513"/>
    </location>
    <ligand>
        <name>GTP</name>
        <dbReference type="ChEBI" id="CHEBI:37565"/>
    </ligand>
</feature>
<feature type="binding site" evidence="2">
    <location>
        <begin position="563"/>
        <end position="566"/>
    </location>
    <ligand>
        <name>GTP</name>
        <dbReference type="ChEBI" id="CHEBI:37565"/>
    </ligand>
</feature>
<dbReference type="EMBL" id="BA000034">
    <property type="protein sequence ID" value="BAC63467.1"/>
    <property type="molecule type" value="Genomic_DNA"/>
</dbReference>
<dbReference type="RefSeq" id="WP_011106624.1">
    <property type="nucleotide sequence ID" value="NC_004606.1"/>
</dbReference>
<dbReference type="SMR" id="P0DB85"/>
<dbReference type="KEGG" id="sps:SPs0372"/>
<dbReference type="HOGENOM" id="CLU_006301_5_0_9"/>
<dbReference type="GO" id="GO:0005829">
    <property type="term" value="C:cytosol"/>
    <property type="evidence" value="ECO:0007669"/>
    <property type="project" value="TreeGrafter"/>
</dbReference>
<dbReference type="GO" id="GO:0005525">
    <property type="term" value="F:GTP binding"/>
    <property type="evidence" value="ECO:0007669"/>
    <property type="project" value="UniProtKB-KW"/>
</dbReference>
<dbReference type="GO" id="GO:0003924">
    <property type="term" value="F:GTPase activity"/>
    <property type="evidence" value="ECO:0007669"/>
    <property type="project" value="UniProtKB-UniRule"/>
</dbReference>
<dbReference type="GO" id="GO:0003743">
    <property type="term" value="F:translation initiation factor activity"/>
    <property type="evidence" value="ECO:0007669"/>
    <property type="project" value="UniProtKB-UniRule"/>
</dbReference>
<dbReference type="CDD" id="cd01887">
    <property type="entry name" value="IF2_eIF5B"/>
    <property type="match status" value="1"/>
</dbReference>
<dbReference type="CDD" id="cd03702">
    <property type="entry name" value="IF2_mtIF2_II"/>
    <property type="match status" value="1"/>
</dbReference>
<dbReference type="CDD" id="cd03692">
    <property type="entry name" value="mtIF2_IVc"/>
    <property type="match status" value="1"/>
</dbReference>
<dbReference type="FunFam" id="2.40.30.10:FF:000007">
    <property type="entry name" value="Translation initiation factor IF-2"/>
    <property type="match status" value="1"/>
</dbReference>
<dbReference type="FunFam" id="2.40.30.10:FF:000008">
    <property type="entry name" value="Translation initiation factor IF-2"/>
    <property type="match status" value="1"/>
</dbReference>
<dbReference type="FunFam" id="3.40.50.10050:FF:000001">
    <property type="entry name" value="Translation initiation factor IF-2"/>
    <property type="match status" value="1"/>
</dbReference>
<dbReference type="FunFam" id="3.40.50.300:FF:000019">
    <property type="entry name" value="Translation initiation factor IF-2"/>
    <property type="match status" value="1"/>
</dbReference>
<dbReference type="Gene3D" id="1.10.10.2480">
    <property type="match status" value="1"/>
</dbReference>
<dbReference type="Gene3D" id="3.40.50.300">
    <property type="entry name" value="P-loop containing nucleotide triphosphate hydrolases"/>
    <property type="match status" value="1"/>
</dbReference>
<dbReference type="Gene3D" id="2.40.30.10">
    <property type="entry name" value="Translation factors"/>
    <property type="match status" value="2"/>
</dbReference>
<dbReference type="Gene3D" id="3.40.50.10050">
    <property type="entry name" value="Translation initiation factor IF- 2, domain 3"/>
    <property type="match status" value="1"/>
</dbReference>
<dbReference type="HAMAP" id="MF_00100_B">
    <property type="entry name" value="IF_2_B"/>
    <property type="match status" value="1"/>
</dbReference>
<dbReference type="InterPro" id="IPR053905">
    <property type="entry name" value="EF-G-like_DII"/>
</dbReference>
<dbReference type="InterPro" id="IPR044145">
    <property type="entry name" value="IF2_II"/>
</dbReference>
<dbReference type="InterPro" id="IPR006847">
    <property type="entry name" value="IF2_N"/>
</dbReference>
<dbReference type="InterPro" id="IPR027417">
    <property type="entry name" value="P-loop_NTPase"/>
</dbReference>
<dbReference type="InterPro" id="IPR005225">
    <property type="entry name" value="Small_GTP-bd"/>
</dbReference>
<dbReference type="InterPro" id="IPR000795">
    <property type="entry name" value="T_Tr_GTP-bd_dom"/>
</dbReference>
<dbReference type="InterPro" id="IPR000178">
    <property type="entry name" value="TF_IF2_bacterial-like"/>
</dbReference>
<dbReference type="InterPro" id="IPR015760">
    <property type="entry name" value="TIF_IF2"/>
</dbReference>
<dbReference type="InterPro" id="IPR023115">
    <property type="entry name" value="TIF_IF2_dom3"/>
</dbReference>
<dbReference type="InterPro" id="IPR036925">
    <property type="entry name" value="TIF_IF2_dom3_sf"/>
</dbReference>
<dbReference type="InterPro" id="IPR009000">
    <property type="entry name" value="Transl_B-barrel_sf"/>
</dbReference>
<dbReference type="NCBIfam" id="TIGR00487">
    <property type="entry name" value="IF-2"/>
    <property type="match status" value="1"/>
</dbReference>
<dbReference type="NCBIfam" id="TIGR00231">
    <property type="entry name" value="small_GTP"/>
    <property type="match status" value="1"/>
</dbReference>
<dbReference type="PANTHER" id="PTHR43381:SF5">
    <property type="entry name" value="TR-TYPE G DOMAIN-CONTAINING PROTEIN"/>
    <property type="match status" value="1"/>
</dbReference>
<dbReference type="PANTHER" id="PTHR43381">
    <property type="entry name" value="TRANSLATION INITIATION FACTOR IF-2-RELATED"/>
    <property type="match status" value="1"/>
</dbReference>
<dbReference type="Pfam" id="PF22042">
    <property type="entry name" value="EF-G_D2"/>
    <property type="match status" value="1"/>
</dbReference>
<dbReference type="Pfam" id="PF00009">
    <property type="entry name" value="GTP_EFTU"/>
    <property type="match status" value="1"/>
</dbReference>
<dbReference type="Pfam" id="PF11987">
    <property type="entry name" value="IF-2"/>
    <property type="match status" value="1"/>
</dbReference>
<dbReference type="Pfam" id="PF04760">
    <property type="entry name" value="IF2_N"/>
    <property type="match status" value="2"/>
</dbReference>
<dbReference type="PRINTS" id="PR00449">
    <property type="entry name" value="RASTRNSFRMNG"/>
</dbReference>
<dbReference type="SUPFAM" id="SSF52156">
    <property type="entry name" value="Initiation factor IF2/eIF5b, domain 3"/>
    <property type="match status" value="1"/>
</dbReference>
<dbReference type="SUPFAM" id="SSF52540">
    <property type="entry name" value="P-loop containing nucleoside triphosphate hydrolases"/>
    <property type="match status" value="1"/>
</dbReference>
<dbReference type="SUPFAM" id="SSF50447">
    <property type="entry name" value="Translation proteins"/>
    <property type="match status" value="2"/>
</dbReference>
<dbReference type="PROSITE" id="PS51722">
    <property type="entry name" value="G_TR_2"/>
    <property type="match status" value="1"/>
</dbReference>
<dbReference type="PROSITE" id="PS01176">
    <property type="entry name" value="IF2"/>
    <property type="match status" value="1"/>
</dbReference>
<reference key="1">
    <citation type="journal article" date="2003" name="Genome Res.">
        <title>Genome sequence of an M3 strain of Streptococcus pyogenes reveals a large-scale genomic rearrangement in invasive strains and new insights into phage evolution.</title>
        <authorList>
            <person name="Nakagawa I."/>
            <person name="Kurokawa K."/>
            <person name="Yamashita A."/>
            <person name="Nakata M."/>
            <person name="Tomiyasu Y."/>
            <person name="Okahashi N."/>
            <person name="Kawabata S."/>
            <person name="Yamazaki K."/>
            <person name="Shiba T."/>
            <person name="Yasunaga T."/>
            <person name="Hayashi H."/>
            <person name="Hattori M."/>
            <person name="Hamada S."/>
        </authorList>
    </citation>
    <scope>NUCLEOTIDE SEQUENCE [LARGE SCALE GENOMIC DNA]</scope>
    <source>
        <strain>SSI-1</strain>
    </source>
</reference>
<proteinExistence type="inferred from homology"/>
<evidence type="ECO:0000250" key="1"/>
<evidence type="ECO:0000255" key="2">
    <source>
        <dbReference type="HAMAP-Rule" id="MF_00100"/>
    </source>
</evidence>
<evidence type="ECO:0000256" key="3">
    <source>
        <dbReference type="SAM" id="MobiDB-lite"/>
    </source>
</evidence>
<organism>
    <name type="scientific">Streptococcus pyogenes serotype M3 (strain SSI-1)</name>
    <dbReference type="NCBI Taxonomy" id="193567"/>
    <lineage>
        <taxon>Bacteria</taxon>
        <taxon>Bacillati</taxon>
        <taxon>Bacillota</taxon>
        <taxon>Bacilli</taxon>
        <taxon>Lactobacillales</taxon>
        <taxon>Streptococcaceae</taxon>
        <taxon>Streptococcus</taxon>
    </lineage>
</organism>
<name>IF2_STRPQ</name>
<gene>
    <name evidence="2" type="primary">infB</name>
    <name type="ordered locus">SPs0372</name>
</gene>